<organism>
    <name type="scientific">Staphylococcus aureus (strain JH9)</name>
    <dbReference type="NCBI Taxonomy" id="359786"/>
    <lineage>
        <taxon>Bacteria</taxon>
        <taxon>Bacillati</taxon>
        <taxon>Bacillota</taxon>
        <taxon>Bacilli</taxon>
        <taxon>Bacillales</taxon>
        <taxon>Staphylococcaceae</taxon>
        <taxon>Staphylococcus</taxon>
    </lineage>
</organism>
<proteinExistence type="inferred from homology"/>
<evidence type="ECO:0000255" key="1">
    <source>
        <dbReference type="HAMAP-Rule" id="MF_00736"/>
    </source>
</evidence>
<evidence type="ECO:0000305" key="2"/>
<gene>
    <name evidence="1" type="primary">rplK</name>
    <name type="ordered locus">SaurJH9_0560</name>
</gene>
<comment type="function">
    <text evidence="1">Forms part of the ribosomal stalk which helps the ribosome interact with GTP-bound translation factors.</text>
</comment>
<comment type="subunit">
    <text evidence="1">Part of the ribosomal stalk of the 50S ribosomal subunit. Interacts with L10 and the large rRNA to form the base of the stalk. L10 forms an elongated spine to which L12 dimers bind in a sequential fashion forming a multimeric L10(L12)X complex.</text>
</comment>
<comment type="PTM">
    <text evidence="1">One or more lysine residues are methylated.</text>
</comment>
<comment type="similarity">
    <text evidence="1">Belongs to the universal ribosomal protein uL11 family.</text>
</comment>
<reference key="1">
    <citation type="submission" date="2007-05" db="EMBL/GenBank/DDBJ databases">
        <title>Complete sequence of chromosome of Staphylococcus aureus subsp. aureus JH9.</title>
        <authorList>
            <consortium name="US DOE Joint Genome Institute"/>
            <person name="Copeland A."/>
            <person name="Lucas S."/>
            <person name="Lapidus A."/>
            <person name="Barry K."/>
            <person name="Detter J.C."/>
            <person name="Glavina del Rio T."/>
            <person name="Hammon N."/>
            <person name="Israni S."/>
            <person name="Pitluck S."/>
            <person name="Chain P."/>
            <person name="Malfatti S."/>
            <person name="Shin M."/>
            <person name="Vergez L."/>
            <person name="Schmutz J."/>
            <person name="Larimer F."/>
            <person name="Land M."/>
            <person name="Hauser L."/>
            <person name="Kyrpides N."/>
            <person name="Kim E."/>
            <person name="Tomasz A."/>
            <person name="Richardson P."/>
        </authorList>
    </citation>
    <scope>NUCLEOTIDE SEQUENCE [LARGE SCALE GENOMIC DNA]</scope>
    <source>
        <strain>JH9</strain>
    </source>
</reference>
<sequence>MAKKVDKVVKLQIPAGKANPAPPVGPALGQAGVNIMGFCKEFNARTQDQAGLIIPVEISVYEDRSFTFITKTPPAPVLLKKAAGIEKGSGEPNKTKVATVTKDQVREIANSKMQDLNAADEEAAMRIIEGTARSMGIVVE</sequence>
<dbReference type="EMBL" id="CP000703">
    <property type="protein sequence ID" value="ABQ48364.1"/>
    <property type="molecule type" value="Genomic_DNA"/>
</dbReference>
<dbReference type="RefSeq" id="WP_001085792.1">
    <property type="nucleotide sequence ID" value="NC_009487.1"/>
</dbReference>
<dbReference type="SMR" id="A5IQ91"/>
<dbReference type="GeneID" id="98344871"/>
<dbReference type="KEGG" id="saj:SaurJH9_0560"/>
<dbReference type="HOGENOM" id="CLU_074237_2_1_9"/>
<dbReference type="GO" id="GO:0022625">
    <property type="term" value="C:cytosolic large ribosomal subunit"/>
    <property type="evidence" value="ECO:0007669"/>
    <property type="project" value="TreeGrafter"/>
</dbReference>
<dbReference type="GO" id="GO:0070180">
    <property type="term" value="F:large ribosomal subunit rRNA binding"/>
    <property type="evidence" value="ECO:0007669"/>
    <property type="project" value="UniProtKB-UniRule"/>
</dbReference>
<dbReference type="GO" id="GO:0003735">
    <property type="term" value="F:structural constituent of ribosome"/>
    <property type="evidence" value="ECO:0007669"/>
    <property type="project" value="InterPro"/>
</dbReference>
<dbReference type="GO" id="GO:0006412">
    <property type="term" value="P:translation"/>
    <property type="evidence" value="ECO:0007669"/>
    <property type="project" value="UniProtKB-UniRule"/>
</dbReference>
<dbReference type="CDD" id="cd00349">
    <property type="entry name" value="Ribosomal_L11"/>
    <property type="match status" value="1"/>
</dbReference>
<dbReference type="FunFam" id="1.10.10.250:FF:000001">
    <property type="entry name" value="50S ribosomal protein L11"/>
    <property type="match status" value="1"/>
</dbReference>
<dbReference type="FunFam" id="3.30.1550.10:FF:000001">
    <property type="entry name" value="50S ribosomal protein L11"/>
    <property type="match status" value="1"/>
</dbReference>
<dbReference type="Gene3D" id="1.10.10.250">
    <property type="entry name" value="Ribosomal protein L11, C-terminal domain"/>
    <property type="match status" value="1"/>
</dbReference>
<dbReference type="Gene3D" id="3.30.1550.10">
    <property type="entry name" value="Ribosomal protein L11/L12, N-terminal domain"/>
    <property type="match status" value="1"/>
</dbReference>
<dbReference type="HAMAP" id="MF_00736">
    <property type="entry name" value="Ribosomal_uL11"/>
    <property type="match status" value="1"/>
</dbReference>
<dbReference type="InterPro" id="IPR000911">
    <property type="entry name" value="Ribosomal_uL11"/>
</dbReference>
<dbReference type="InterPro" id="IPR006519">
    <property type="entry name" value="Ribosomal_uL11_bac-typ"/>
</dbReference>
<dbReference type="InterPro" id="IPR020783">
    <property type="entry name" value="Ribosomal_uL11_C"/>
</dbReference>
<dbReference type="InterPro" id="IPR036769">
    <property type="entry name" value="Ribosomal_uL11_C_sf"/>
</dbReference>
<dbReference type="InterPro" id="IPR020785">
    <property type="entry name" value="Ribosomal_uL11_CS"/>
</dbReference>
<dbReference type="InterPro" id="IPR020784">
    <property type="entry name" value="Ribosomal_uL11_N"/>
</dbReference>
<dbReference type="InterPro" id="IPR036796">
    <property type="entry name" value="Ribosomal_uL11_N_sf"/>
</dbReference>
<dbReference type="NCBIfam" id="TIGR01632">
    <property type="entry name" value="L11_bact"/>
    <property type="match status" value="1"/>
</dbReference>
<dbReference type="PANTHER" id="PTHR11661">
    <property type="entry name" value="60S RIBOSOMAL PROTEIN L12"/>
    <property type="match status" value="1"/>
</dbReference>
<dbReference type="PANTHER" id="PTHR11661:SF1">
    <property type="entry name" value="LARGE RIBOSOMAL SUBUNIT PROTEIN UL11M"/>
    <property type="match status" value="1"/>
</dbReference>
<dbReference type="Pfam" id="PF00298">
    <property type="entry name" value="Ribosomal_L11"/>
    <property type="match status" value="1"/>
</dbReference>
<dbReference type="Pfam" id="PF03946">
    <property type="entry name" value="Ribosomal_L11_N"/>
    <property type="match status" value="1"/>
</dbReference>
<dbReference type="SMART" id="SM00649">
    <property type="entry name" value="RL11"/>
    <property type="match status" value="1"/>
</dbReference>
<dbReference type="SUPFAM" id="SSF54747">
    <property type="entry name" value="Ribosomal L11/L12e N-terminal domain"/>
    <property type="match status" value="1"/>
</dbReference>
<dbReference type="SUPFAM" id="SSF46906">
    <property type="entry name" value="Ribosomal protein L11, C-terminal domain"/>
    <property type="match status" value="1"/>
</dbReference>
<dbReference type="PROSITE" id="PS00359">
    <property type="entry name" value="RIBOSOMAL_L11"/>
    <property type="match status" value="1"/>
</dbReference>
<feature type="chain" id="PRO_1000083408" description="Large ribosomal subunit protein uL11">
    <location>
        <begin position="1"/>
        <end position="140"/>
    </location>
</feature>
<protein>
    <recommendedName>
        <fullName evidence="1">Large ribosomal subunit protein uL11</fullName>
    </recommendedName>
    <alternativeName>
        <fullName evidence="2">50S ribosomal protein L11</fullName>
    </alternativeName>
</protein>
<name>RL11_STAA9</name>
<keyword id="KW-0488">Methylation</keyword>
<keyword id="KW-0687">Ribonucleoprotein</keyword>
<keyword id="KW-0689">Ribosomal protein</keyword>
<keyword id="KW-0694">RNA-binding</keyword>
<keyword id="KW-0699">rRNA-binding</keyword>
<accession>A5IQ91</accession>